<name>PNP_TERTT</name>
<proteinExistence type="inferred from homology"/>
<comment type="function">
    <text evidence="1">Involved in mRNA degradation. Catalyzes the phosphorolysis of single-stranded polyribonucleotides processively in the 3'- to 5'-direction.</text>
</comment>
<comment type="catalytic activity">
    <reaction evidence="1">
        <text>RNA(n+1) + phosphate = RNA(n) + a ribonucleoside 5'-diphosphate</text>
        <dbReference type="Rhea" id="RHEA:22096"/>
        <dbReference type="Rhea" id="RHEA-COMP:14527"/>
        <dbReference type="Rhea" id="RHEA-COMP:17342"/>
        <dbReference type="ChEBI" id="CHEBI:43474"/>
        <dbReference type="ChEBI" id="CHEBI:57930"/>
        <dbReference type="ChEBI" id="CHEBI:140395"/>
        <dbReference type="EC" id="2.7.7.8"/>
    </reaction>
</comment>
<comment type="cofactor">
    <cofactor evidence="1">
        <name>Mg(2+)</name>
        <dbReference type="ChEBI" id="CHEBI:18420"/>
    </cofactor>
</comment>
<comment type="subunit">
    <text evidence="1">Component of the RNA degradosome, which is a multiprotein complex involved in RNA processing and mRNA degradation.</text>
</comment>
<comment type="subcellular location">
    <subcellularLocation>
        <location evidence="1">Cytoplasm</location>
    </subcellularLocation>
</comment>
<comment type="similarity">
    <text evidence="1">Belongs to the polyribonucleotide nucleotidyltransferase family.</text>
</comment>
<organism>
    <name type="scientific">Teredinibacter turnerae (strain ATCC 39867 / T7901)</name>
    <dbReference type="NCBI Taxonomy" id="377629"/>
    <lineage>
        <taxon>Bacteria</taxon>
        <taxon>Pseudomonadati</taxon>
        <taxon>Pseudomonadota</taxon>
        <taxon>Gammaproteobacteria</taxon>
        <taxon>Cellvibrionales</taxon>
        <taxon>Cellvibrionaceae</taxon>
        <taxon>Teredinibacter</taxon>
    </lineage>
</organism>
<keyword id="KW-0963">Cytoplasm</keyword>
<keyword id="KW-0460">Magnesium</keyword>
<keyword id="KW-0479">Metal-binding</keyword>
<keyword id="KW-0548">Nucleotidyltransferase</keyword>
<keyword id="KW-1185">Reference proteome</keyword>
<keyword id="KW-0694">RNA-binding</keyword>
<keyword id="KW-0808">Transferase</keyword>
<dbReference type="EC" id="2.7.7.8" evidence="1"/>
<dbReference type="EMBL" id="CP001614">
    <property type="protein sequence ID" value="ACR12134.1"/>
    <property type="molecule type" value="Genomic_DNA"/>
</dbReference>
<dbReference type="RefSeq" id="WP_015818246.1">
    <property type="nucleotide sequence ID" value="NC_012997.1"/>
</dbReference>
<dbReference type="SMR" id="C5BPV5"/>
<dbReference type="STRING" id="377629.TERTU_3213"/>
<dbReference type="KEGG" id="ttu:TERTU_3213"/>
<dbReference type="eggNOG" id="COG1185">
    <property type="taxonomic scope" value="Bacteria"/>
</dbReference>
<dbReference type="HOGENOM" id="CLU_004217_2_2_6"/>
<dbReference type="OrthoDB" id="9804305at2"/>
<dbReference type="Proteomes" id="UP000009080">
    <property type="component" value="Chromosome"/>
</dbReference>
<dbReference type="GO" id="GO:0005829">
    <property type="term" value="C:cytosol"/>
    <property type="evidence" value="ECO:0007669"/>
    <property type="project" value="TreeGrafter"/>
</dbReference>
<dbReference type="GO" id="GO:0000175">
    <property type="term" value="F:3'-5'-RNA exonuclease activity"/>
    <property type="evidence" value="ECO:0007669"/>
    <property type="project" value="TreeGrafter"/>
</dbReference>
<dbReference type="GO" id="GO:0000287">
    <property type="term" value="F:magnesium ion binding"/>
    <property type="evidence" value="ECO:0007669"/>
    <property type="project" value="UniProtKB-UniRule"/>
</dbReference>
<dbReference type="GO" id="GO:0004654">
    <property type="term" value="F:polyribonucleotide nucleotidyltransferase activity"/>
    <property type="evidence" value="ECO:0007669"/>
    <property type="project" value="UniProtKB-UniRule"/>
</dbReference>
<dbReference type="GO" id="GO:0003723">
    <property type="term" value="F:RNA binding"/>
    <property type="evidence" value="ECO:0007669"/>
    <property type="project" value="UniProtKB-UniRule"/>
</dbReference>
<dbReference type="GO" id="GO:0006402">
    <property type="term" value="P:mRNA catabolic process"/>
    <property type="evidence" value="ECO:0007669"/>
    <property type="project" value="UniProtKB-UniRule"/>
</dbReference>
<dbReference type="GO" id="GO:0006396">
    <property type="term" value="P:RNA processing"/>
    <property type="evidence" value="ECO:0007669"/>
    <property type="project" value="InterPro"/>
</dbReference>
<dbReference type="CDD" id="cd02393">
    <property type="entry name" value="KH-I_PNPase"/>
    <property type="match status" value="1"/>
</dbReference>
<dbReference type="CDD" id="cd11363">
    <property type="entry name" value="RNase_PH_PNPase_1"/>
    <property type="match status" value="1"/>
</dbReference>
<dbReference type="CDD" id="cd11364">
    <property type="entry name" value="RNase_PH_PNPase_2"/>
    <property type="match status" value="1"/>
</dbReference>
<dbReference type="CDD" id="cd04472">
    <property type="entry name" value="S1_PNPase"/>
    <property type="match status" value="1"/>
</dbReference>
<dbReference type="FunFam" id="2.40.50.140:FF:000023">
    <property type="entry name" value="Polyribonucleotide nucleotidyltransferase"/>
    <property type="match status" value="1"/>
</dbReference>
<dbReference type="FunFam" id="3.30.1370.10:FF:000001">
    <property type="entry name" value="Polyribonucleotide nucleotidyltransferase"/>
    <property type="match status" value="1"/>
</dbReference>
<dbReference type="FunFam" id="3.30.230.70:FF:000001">
    <property type="entry name" value="Polyribonucleotide nucleotidyltransferase"/>
    <property type="match status" value="1"/>
</dbReference>
<dbReference type="FunFam" id="3.30.230.70:FF:000002">
    <property type="entry name" value="Polyribonucleotide nucleotidyltransferase"/>
    <property type="match status" value="1"/>
</dbReference>
<dbReference type="Gene3D" id="3.30.230.70">
    <property type="entry name" value="GHMP Kinase, N-terminal domain"/>
    <property type="match status" value="2"/>
</dbReference>
<dbReference type="Gene3D" id="3.30.1370.10">
    <property type="entry name" value="K Homology domain, type 1"/>
    <property type="match status" value="1"/>
</dbReference>
<dbReference type="Gene3D" id="2.40.50.140">
    <property type="entry name" value="Nucleic acid-binding proteins"/>
    <property type="match status" value="1"/>
</dbReference>
<dbReference type="HAMAP" id="MF_01595">
    <property type="entry name" value="PNPase"/>
    <property type="match status" value="1"/>
</dbReference>
<dbReference type="InterPro" id="IPR001247">
    <property type="entry name" value="ExoRNase_PH_dom1"/>
</dbReference>
<dbReference type="InterPro" id="IPR015847">
    <property type="entry name" value="ExoRNase_PH_dom2"/>
</dbReference>
<dbReference type="InterPro" id="IPR036345">
    <property type="entry name" value="ExoRNase_PH_dom2_sf"/>
</dbReference>
<dbReference type="InterPro" id="IPR004087">
    <property type="entry name" value="KH_dom"/>
</dbReference>
<dbReference type="InterPro" id="IPR004088">
    <property type="entry name" value="KH_dom_type_1"/>
</dbReference>
<dbReference type="InterPro" id="IPR036612">
    <property type="entry name" value="KH_dom_type_1_sf"/>
</dbReference>
<dbReference type="InterPro" id="IPR012340">
    <property type="entry name" value="NA-bd_OB-fold"/>
</dbReference>
<dbReference type="InterPro" id="IPR012162">
    <property type="entry name" value="PNPase"/>
</dbReference>
<dbReference type="InterPro" id="IPR027408">
    <property type="entry name" value="PNPase/RNase_PH_dom_sf"/>
</dbReference>
<dbReference type="InterPro" id="IPR015848">
    <property type="entry name" value="PNPase_PH_RNA-bd_bac/org-type"/>
</dbReference>
<dbReference type="InterPro" id="IPR020568">
    <property type="entry name" value="Ribosomal_Su5_D2-typ_SF"/>
</dbReference>
<dbReference type="InterPro" id="IPR003029">
    <property type="entry name" value="S1_domain"/>
</dbReference>
<dbReference type="NCBIfam" id="TIGR03591">
    <property type="entry name" value="polynuc_phos"/>
    <property type="match status" value="1"/>
</dbReference>
<dbReference type="NCBIfam" id="NF008805">
    <property type="entry name" value="PRK11824.1"/>
    <property type="match status" value="1"/>
</dbReference>
<dbReference type="PANTHER" id="PTHR11252">
    <property type="entry name" value="POLYRIBONUCLEOTIDE NUCLEOTIDYLTRANSFERASE"/>
    <property type="match status" value="1"/>
</dbReference>
<dbReference type="PANTHER" id="PTHR11252:SF0">
    <property type="entry name" value="POLYRIBONUCLEOTIDE NUCLEOTIDYLTRANSFERASE 1, MITOCHONDRIAL"/>
    <property type="match status" value="1"/>
</dbReference>
<dbReference type="Pfam" id="PF00013">
    <property type="entry name" value="KH_1"/>
    <property type="match status" value="1"/>
</dbReference>
<dbReference type="Pfam" id="PF03726">
    <property type="entry name" value="PNPase"/>
    <property type="match status" value="1"/>
</dbReference>
<dbReference type="Pfam" id="PF01138">
    <property type="entry name" value="RNase_PH"/>
    <property type="match status" value="2"/>
</dbReference>
<dbReference type="Pfam" id="PF03725">
    <property type="entry name" value="RNase_PH_C"/>
    <property type="match status" value="2"/>
</dbReference>
<dbReference type="Pfam" id="PF00575">
    <property type="entry name" value="S1"/>
    <property type="match status" value="1"/>
</dbReference>
<dbReference type="PIRSF" id="PIRSF005499">
    <property type="entry name" value="PNPase"/>
    <property type="match status" value="1"/>
</dbReference>
<dbReference type="SMART" id="SM00322">
    <property type="entry name" value="KH"/>
    <property type="match status" value="1"/>
</dbReference>
<dbReference type="SMART" id="SM00316">
    <property type="entry name" value="S1"/>
    <property type="match status" value="1"/>
</dbReference>
<dbReference type="SUPFAM" id="SSF54791">
    <property type="entry name" value="Eukaryotic type KH-domain (KH-domain type I)"/>
    <property type="match status" value="1"/>
</dbReference>
<dbReference type="SUPFAM" id="SSF50249">
    <property type="entry name" value="Nucleic acid-binding proteins"/>
    <property type="match status" value="1"/>
</dbReference>
<dbReference type="SUPFAM" id="SSF55666">
    <property type="entry name" value="Ribonuclease PH domain 2-like"/>
    <property type="match status" value="2"/>
</dbReference>
<dbReference type="SUPFAM" id="SSF54211">
    <property type="entry name" value="Ribosomal protein S5 domain 2-like"/>
    <property type="match status" value="2"/>
</dbReference>
<dbReference type="PROSITE" id="PS50084">
    <property type="entry name" value="KH_TYPE_1"/>
    <property type="match status" value="1"/>
</dbReference>
<dbReference type="PROSITE" id="PS50126">
    <property type="entry name" value="S1"/>
    <property type="match status" value="1"/>
</dbReference>
<sequence>MNPVIKKFQYGNDTITLETGRIARQATGAVLASMGKTSVLCTVVGAKEASPGQDFFPLSVHYQEKAYAAGKIPGGFFKREGRPSEKETLTSRLIDRPIRPLFPDGFVNEVQVVCTVVAAEKDVDPDICAMIGTSAALAISGIPFNGPIGAARVGYTQADGYLLNPTYQALASSELDMVVAGTQDAVLMVESEANELPEDIMLGAVLYAHQEMQAVVQAVNELAKDAGKPTWDWQPEAVNQALVDALKADFEESIGVAYRITDKQKRYDRLSELRSQAVAQLAGEGSDISQDDVKKVFGKLEKNIVRSRVVAGEPRIDGRDTKTVRPLQVEVGVLPKVHGSALFTRGETQALVVATLGSARDAQIIDALEGEHRDNFMLHYNFPPYSVGECGRMGATGRREIGHGRLARRGVAAMLPKEDQFPYTMRVVSEITESNGSSSMASVCGSSLALMDAGVPLKAPVAGIAMGLVKEENGFAVLTDILGDEDHLGDMDFKVAGTANGVTALQMDIKIEGITEEIMETALEQALHARLHILSEMNAVIAQPRESLSDNAPQFHTMKVDPEKIRDIIGKGGATIRSITEETGASIDIDDDGTVKIYGDDGDSLQGAINRIEEITAEAEIGEVYKGKVVRIVDFGAFVNFLPGKDGLVHISQIAHERVQNVTDYLKEGQEVDVKCMDIDQRGRIKLSIKELLPQPEETGGSDAE</sequence>
<accession>C5BPV5</accession>
<feature type="chain" id="PRO_1000215670" description="Polyribonucleotide nucleotidyltransferase">
    <location>
        <begin position="1"/>
        <end position="705"/>
    </location>
</feature>
<feature type="domain" description="KH" evidence="1">
    <location>
        <begin position="553"/>
        <end position="612"/>
    </location>
</feature>
<feature type="domain" description="S1 motif" evidence="1">
    <location>
        <begin position="622"/>
        <end position="690"/>
    </location>
</feature>
<feature type="binding site" evidence="1">
    <location>
        <position position="486"/>
    </location>
    <ligand>
        <name>Mg(2+)</name>
        <dbReference type="ChEBI" id="CHEBI:18420"/>
    </ligand>
</feature>
<feature type="binding site" evidence="1">
    <location>
        <position position="492"/>
    </location>
    <ligand>
        <name>Mg(2+)</name>
        <dbReference type="ChEBI" id="CHEBI:18420"/>
    </ligand>
</feature>
<reference key="1">
    <citation type="journal article" date="2009" name="PLoS ONE">
        <title>The complete genome of Teredinibacter turnerae T7901: an intracellular endosymbiont of marine wood-boring bivalves (shipworms).</title>
        <authorList>
            <person name="Yang J.C."/>
            <person name="Madupu R."/>
            <person name="Durkin A.S."/>
            <person name="Ekborg N.A."/>
            <person name="Pedamallu C.S."/>
            <person name="Hostetler J.B."/>
            <person name="Radune D."/>
            <person name="Toms B.S."/>
            <person name="Henrissat B."/>
            <person name="Coutinho P.M."/>
            <person name="Schwarz S."/>
            <person name="Field L."/>
            <person name="Trindade-Silva A.E."/>
            <person name="Soares C.A.G."/>
            <person name="Elshahawi S."/>
            <person name="Hanora A."/>
            <person name="Schmidt E.W."/>
            <person name="Haygood M.G."/>
            <person name="Posfai J."/>
            <person name="Benner J."/>
            <person name="Madinger C."/>
            <person name="Nove J."/>
            <person name="Anton B."/>
            <person name="Chaudhary K."/>
            <person name="Foster J."/>
            <person name="Holman A."/>
            <person name="Kumar S."/>
            <person name="Lessard P.A."/>
            <person name="Luyten Y.A."/>
            <person name="Slatko B."/>
            <person name="Wood N."/>
            <person name="Wu B."/>
            <person name="Teplitski M."/>
            <person name="Mougous J.D."/>
            <person name="Ward N."/>
            <person name="Eisen J.A."/>
            <person name="Badger J.H."/>
            <person name="Distel D.L."/>
        </authorList>
    </citation>
    <scope>NUCLEOTIDE SEQUENCE [LARGE SCALE GENOMIC DNA]</scope>
    <source>
        <strain>ATCC 39867 / T7901</strain>
    </source>
</reference>
<evidence type="ECO:0000255" key="1">
    <source>
        <dbReference type="HAMAP-Rule" id="MF_01595"/>
    </source>
</evidence>
<protein>
    <recommendedName>
        <fullName evidence="1">Polyribonucleotide nucleotidyltransferase</fullName>
        <ecNumber evidence="1">2.7.7.8</ecNumber>
    </recommendedName>
    <alternativeName>
        <fullName evidence="1">Polynucleotide phosphorylase</fullName>
        <shortName evidence="1">PNPase</shortName>
    </alternativeName>
</protein>
<gene>
    <name evidence="1" type="primary">pnp</name>
    <name type="ordered locus">TERTU_3213</name>
</gene>